<feature type="chain" id="PRO_1000023838" description="Hydrogenase maturation factor HypA">
    <location>
        <begin position="1"/>
        <end position="126"/>
    </location>
</feature>
<feature type="binding site" evidence="1">
    <location>
        <position position="2"/>
    </location>
    <ligand>
        <name>Ni(2+)</name>
        <dbReference type="ChEBI" id="CHEBI:49786"/>
    </ligand>
</feature>
<feature type="binding site" evidence="1">
    <location>
        <position position="78"/>
    </location>
    <ligand>
        <name>Zn(2+)</name>
        <dbReference type="ChEBI" id="CHEBI:29105"/>
    </ligand>
</feature>
<feature type="binding site" evidence="1">
    <location>
        <position position="81"/>
    </location>
    <ligand>
        <name>Zn(2+)</name>
        <dbReference type="ChEBI" id="CHEBI:29105"/>
    </ligand>
</feature>
<feature type="binding site" evidence="1">
    <location>
        <position position="97"/>
    </location>
    <ligand>
        <name>Zn(2+)</name>
        <dbReference type="ChEBI" id="CHEBI:29105"/>
    </ligand>
</feature>
<feature type="binding site" evidence="1">
    <location>
        <position position="100"/>
    </location>
    <ligand>
        <name>Zn(2+)</name>
        <dbReference type="ChEBI" id="CHEBI:29105"/>
    </ligand>
</feature>
<comment type="function">
    <text evidence="1">Involved in the maturation of [NiFe] hydrogenases. Required for nickel insertion into the metal center of the hydrogenase.</text>
</comment>
<comment type="similarity">
    <text evidence="1">Belongs to the HypA/HybF family.</text>
</comment>
<gene>
    <name evidence="1" type="primary">hypA</name>
    <name type="ordered locus">MmarC5_1373</name>
</gene>
<proteinExistence type="inferred from homology"/>
<reference key="1">
    <citation type="submission" date="2007-03" db="EMBL/GenBank/DDBJ databases">
        <title>Complete sequence of chromosome of Methanococcus maripaludis C5.</title>
        <authorList>
            <consortium name="US DOE Joint Genome Institute"/>
            <person name="Copeland A."/>
            <person name="Lucas S."/>
            <person name="Lapidus A."/>
            <person name="Barry K."/>
            <person name="Glavina del Rio T."/>
            <person name="Dalin E."/>
            <person name="Tice H."/>
            <person name="Pitluck S."/>
            <person name="Chertkov O."/>
            <person name="Brettin T."/>
            <person name="Bruce D."/>
            <person name="Han C."/>
            <person name="Detter J.C."/>
            <person name="Schmutz J."/>
            <person name="Larimer F."/>
            <person name="Land M."/>
            <person name="Hauser L."/>
            <person name="Kyrpides N."/>
            <person name="Mikhailova N."/>
            <person name="Sieprawska-Lupa M."/>
            <person name="Whitman W.B."/>
            <person name="Richardson P."/>
        </authorList>
    </citation>
    <scope>NUCLEOTIDE SEQUENCE [LARGE SCALE GENOMIC DNA]</scope>
    <source>
        <strain>C5 / ATCC BAA-1333</strain>
    </source>
</reference>
<organism>
    <name type="scientific">Methanococcus maripaludis (strain C5 / ATCC BAA-1333)</name>
    <dbReference type="NCBI Taxonomy" id="402880"/>
    <lineage>
        <taxon>Archaea</taxon>
        <taxon>Methanobacteriati</taxon>
        <taxon>Methanobacteriota</taxon>
        <taxon>Methanomada group</taxon>
        <taxon>Methanococci</taxon>
        <taxon>Methanococcales</taxon>
        <taxon>Methanococcaceae</taxon>
        <taxon>Methanococcus</taxon>
    </lineage>
</organism>
<dbReference type="EMBL" id="CP000609">
    <property type="protein sequence ID" value="ABO35671.1"/>
    <property type="molecule type" value="Genomic_DNA"/>
</dbReference>
<dbReference type="RefSeq" id="WP_011869122.1">
    <property type="nucleotide sequence ID" value="NC_009135.1"/>
</dbReference>
<dbReference type="SMR" id="A4FZN7"/>
<dbReference type="STRING" id="402880.MmarC5_1373"/>
<dbReference type="GeneID" id="4928674"/>
<dbReference type="KEGG" id="mmq:MmarC5_1373"/>
<dbReference type="eggNOG" id="arCOG04426">
    <property type="taxonomic scope" value="Archaea"/>
</dbReference>
<dbReference type="HOGENOM" id="CLU_126929_2_1_2"/>
<dbReference type="OrthoDB" id="36835at2157"/>
<dbReference type="Proteomes" id="UP000000253">
    <property type="component" value="Chromosome"/>
</dbReference>
<dbReference type="GO" id="GO:0016151">
    <property type="term" value="F:nickel cation binding"/>
    <property type="evidence" value="ECO:0007669"/>
    <property type="project" value="UniProtKB-UniRule"/>
</dbReference>
<dbReference type="GO" id="GO:0008270">
    <property type="term" value="F:zinc ion binding"/>
    <property type="evidence" value="ECO:0007669"/>
    <property type="project" value="UniProtKB-UniRule"/>
</dbReference>
<dbReference type="GO" id="GO:0051604">
    <property type="term" value="P:protein maturation"/>
    <property type="evidence" value="ECO:0007669"/>
    <property type="project" value="InterPro"/>
</dbReference>
<dbReference type="GO" id="GO:0036211">
    <property type="term" value="P:protein modification process"/>
    <property type="evidence" value="ECO:0007669"/>
    <property type="project" value="UniProtKB-UniRule"/>
</dbReference>
<dbReference type="Gene3D" id="3.30.2320.80">
    <property type="match status" value="1"/>
</dbReference>
<dbReference type="HAMAP" id="MF_00213">
    <property type="entry name" value="HypA_HybF"/>
    <property type="match status" value="1"/>
</dbReference>
<dbReference type="InterPro" id="IPR000688">
    <property type="entry name" value="HypA/HybF"/>
</dbReference>
<dbReference type="NCBIfam" id="TIGR00100">
    <property type="entry name" value="hypA"/>
    <property type="match status" value="1"/>
</dbReference>
<dbReference type="PANTHER" id="PTHR34535">
    <property type="entry name" value="HYDROGENASE MATURATION FACTOR HYPA"/>
    <property type="match status" value="1"/>
</dbReference>
<dbReference type="PANTHER" id="PTHR34535:SF3">
    <property type="entry name" value="HYDROGENASE MATURATION FACTOR HYPA"/>
    <property type="match status" value="1"/>
</dbReference>
<dbReference type="Pfam" id="PF01155">
    <property type="entry name" value="HypA"/>
    <property type="match status" value="1"/>
</dbReference>
<dbReference type="PIRSF" id="PIRSF004761">
    <property type="entry name" value="Hydrgn_mat_HypA"/>
    <property type="match status" value="1"/>
</dbReference>
<evidence type="ECO:0000255" key="1">
    <source>
        <dbReference type="HAMAP-Rule" id="MF_00213"/>
    </source>
</evidence>
<protein>
    <recommendedName>
        <fullName evidence="1">Hydrogenase maturation factor HypA</fullName>
    </recommendedName>
</protein>
<name>HYPA_METM5</name>
<keyword id="KW-0479">Metal-binding</keyword>
<keyword id="KW-0533">Nickel</keyword>
<keyword id="KW-0862">Zinc</keyword>
<sequence length="126" mass="14141">MHELSYATSVLNAILDAVKQQEELGRKVIKVNDINLEIGDLTLLSVDQLQFVFEVISEDTVCKGAELKAEIVKPKIFCMDCEFEGNLDTKDELEVACPKCESRNVKLKGGKEFNIVNATIEFDDEE</sequence>
<accession>A4FZN7</accession>